<feature type="chain" id="PRO_0000261164" description="Tektin-4">
    <location>
        <begin position="1"/>
        <end position="447"/>
    </location>
</feature>
<feature type="coiled-coil region" evidence="4">
    <location>
        <begin position="114"/>
        <end position="143"/>
    </location>
</feature>
<feature type="coiled-coil region" evidence="4">
    <location>
        <begin position="324"/>
        <end position="348"/>
    </location>
</feature>
<feature type="coiled-coil region" evidence="4">
    <location>
        <begin position="375"/>
        <end position="423"/>
    </location>
</feature>
<accession>Q6AXV2</accession>
<sequence>MAQAEVLLTKEPAPQSIDVCELPQKKYEVACNTGAYTSAGLATAGFRTAKYLMDEWFQNSYARYHQAFADRDYSERQRHESKQLAAETGELAYRTQLDSTRRVGERLEDMHCWKSELQREIDELSSETDQMMAQKLRLQRALDALSVPFSIATDNLQCRERRQHPDLVRDYVEVELLKETELIRNIQELLKRTMGQAVGQIRLNREHKENCEINWSDKVEVYNIDDTCARYTNESTQVQFYPHSSKFEESASTPETWGKFTQDVLLRAERERLASVNLRKLIDCILRDTAEDLRLQCDAVNLAFSNRCEELNDARQKLQYHLLKILSEITDQEHQIAALKQAIKDKEAPLRVAQTRLYQRSHRPNVELCRDNAQFRLMSEVEELNMSLKVLKEKLQDAEQALRNLEDSRMSLEKDIAVKTNSLFIDRQKCMTHRNRYPSVLQLAGYQ</sequence>
<protein>
    <recommendedName>
        <fullName>Tektin-4</fullName>
    </recommendedName>
</protein>
<organism>
    <name type="scientific">Rattus norvegicus</name>
    <name type="common">Rat</name>
    <dbReference type="NCBI Taxonomy" id="10116"/>
    <lineage>
        <taxon>Eukaryota</taxon>
        <taxon>Metazoa</taxon>
        <taxon>Chordata</taxon>
        <taxon>Craniata</taxon>
        <taxon>Vertebrata</taxon>
        <taxon>Euteleostomi</taxon>
        <taxon>Mammalia</taxon>
        <taxon>Eutheria</taxon>
        <taxon>Euarchontoglires</taxon>
        <taxon>Glires</taxon>
        <taxon>Rodentia</taxon>
        <taxon>Myomorpha</taxon>
        <taxon>Muroidea</taxon>
        <taxon>Muridae</taxon>
        <taxon>Murinae</taxon>
        <taxon>Rattus</taxon>
    </lineage>
</organism>
<dbReference type="EMBL" id="AB194013">
    <property type="protein sequence ID" value="BAD93477.1"/>
    <property type="molecule type" value="mRNA"/>
</dbReference>
<dbReference type="EMBL" id="BC079304">
    <property type="protein sequence ID" value="AAH79304.1"/>
    <property type="molecule type" value="mRNA"/>
</dbReference>
<dbReference type="RefSeq" id="NP_001013987.1">
    <property type="nucleotide sequence ID" value="NM_001013965.1"/>
</dbReference>
<dbReference type="SMR" id="Q6AXV2"/>
<dbReference type="FunCoup" id="Q6AXV2">
    <property type="interactions" value="29"/>
</dbReference>
<dbReference type="STRING" id="10116.ENSRNOP00000025434"/>
<dbReference type="PhosphoSitePlus" id="Q6AXV2"/>
<dbReference type="PaxDb" id="10116-ENSRNOP00000025434"/>
<dbReference type="Ensembl" id="ENSRNOT00000025434.6">
    <property type="protein sequence ID" value="ENSRNOP00000025434.3"/>
    <property type="gene ID" value="ENSRNOG00000018792.6"/>
</dbReference>
<dbReference type="GeneID" id="302991"/>
<dbReference type="KEGG" id="rno:302991"/>
<dbReference type="UCSC" id="RGD:1308075">
    <property type="organism name" value="rat"/>
</dbReference>
<dbReference type="AGR" id="RGD:1308075"/>
<dbReference type="CTD" id="150483"/>
<dbReference type="RGD" id="1308075">
    <property type="gene designation" value="Tekt4"/>
</dbReference>
<dbReference type="eggNOG" id="KOG2685">
    <property type="taxonomic scope" value="Eukaryota"/>
</dbReference>
<dbReference type="GeneTree" id="ENSGT00950000182894"/>
<dbReference type="HOGENOM" id="CLU_033588_2_1_1"/>
<dbReference type="InParanoid" id="Q6AXV2"/>
<dbReference type="OMA" id="RNLEDTH"/>
<dbReference type="OrthoDB" id="5788000at2759"/>
<dbReference type="PhylomeDB" id="Q6AXV2"/>
<dbReference type="TreeFam" id="TF320754"/>
<dbReference type="PRO" id="PR:Q6AXV2"/>
<dbReference type="Proteomes" id="UP000002494">
    <property type="component" value="Chromosome 10"/>
</dbReference>
<dbReference type="Bgee" id="ENSRNOG00000018792">
    <property type="expression patterns" value="Expressed in testis and 6 other cell types or tissues"/>
</dbReference>
<dbReference type="GO" id="GO:0160111">
    <property type="term" value="C:axonemal A tubule inner sheath"/>
    <property type="evidence" value="ECO:0000250"/>
    <property type="project" value="UniProtKB"/>
</dbReference>
<dbReference type="GO" id="GO:0005879">
    <property type="term" value="C:axonemal microtubule"/>
    <property type="evidence" value="ECO:0000250"/>
    <property type="project" value="UniProtKB"/>
</dbReference>
<dbReference type="GO" id="GO:0015630">
    <property type="term" value="C:microtubule cytoskeleton"/>
    <property type="evidence" value="ECO:0000318"/>
    <property type="project" value="GO_Central"/>
</dbReference>
<dbReference type="GO" id="GO:0036126">
    <property type="term" value="C:sperm flagellum"/>
    <property type="evidence" value="ECO:0000250"/>
    <property type="project" value="UniProtKB"/>
</dbReference>
<dbReference type="GO" id="GO:0097225">
    <property type="term" value="C:sperm midpiece"/>
    <property type="evidence" value="ECO:0000266"/>
    <property type="project" value="RGD"/>
</dbReference>
<dbReference type="GO" id="GO:0097228">
    <property type="term" value="C:sperm principal piece"/>
    <property type="evidence" value="ECO:0000266"/>
    <property type="project" value="RGD"/>
</dbReference>
<dbReference type="GO" id="GO:0060271">
    <property type="term" value="P:cilium assembly"/>
    <property type="evidence" value="ECO:0000318"/>
    <property type="project" value="GO_Central"/>
</dbReference>
<dbReference type="GO" id="GO:0060294">
    <property type="term" value="P:cilium movement involved in cell motility"/>
    <property type="evidence" value="ECO:0000266"/>
    <property type="project" value="RGD"/>
</dbReference>
<dbReference type="GO" id="GO:0030317">
    <property type="term" value="P:flagellated sperm motility"/>
    <property type="evidence" value="ECO:0000250"/>
    <property type="project" value="UniProtKB"/>
</dbReference>
<dbReference type="GO" id="GO:0060378">
    <property type="term" value="P:regulation of brood size"/>
    <property type="evidence" value="ECO:0000266"/>
    <property type="project" value="RGD"/>
</dbReference>
<dbReference type="InterPro" id="IPR048256">
    <property type="entry name" value="Tektin-like"/>
</dbReference>
<dbReference type="InterPro" id="IPR000435">
    <property type="entry name" value="Tektins"/>
</dbReference>
<dbReference type="PANTHER" id="PTHR19960">
    <property type="entry name" value="TEKTIN"/>
    <property type="match status" value="1"/>
</dbReference>
<dbReference type="PANTHER" id="PTHR19960:SF12">
    <property type="entry name" value="TEKTIN-4"/>
    <property type="match status" value="1"/>
</dbReference>
<dbReference type="Pfam" id="PF03148">
    <property type="entry name" value="Tektin"/>
    <property type="match status" value="1"/>
</dbReference>
<dbReference type="PRINTS" id="PR00511">
    <property type="entry name" value="TEKTIN"/>
</dbReference>
<comment type="function">
    <text evidence="2 3">Microtubule inner protein (MIP) part of the dynein-decorated doublet microtubules (DMTs) in cilia and flagellar axoneme. Forms filamentous polymers in the walls of ciliary and flagellar microtubules (By similarity). Contributes to normal sperm motility (By similarity).</text>
</comment>
<comment type="subunit">
    <text evidence="1">Microtubule inner protein component of sperm flagellar doublet microtubules.</text>
</comment>
<comment type="subcellular location">
    <subcellularLocation>
        <location evidence="2">Cytoplasm</location>
        <location evidence="2">Cytoskeleton</location>
        <location evidence="2">Cilium axoneme</location>
    </subcellularLocation>
    <subcellularLocation>
        <location evidence="1">Cytoplasm</location>
        <location evidence="1">Cytoskeleton</location>
        <location evidence="1">Flagellum axoneme</location>
    </subcellularLocation>
    <text evidence="1">Found in the abaxial (convex) surface of outer dense fibers in sperm flagella.</text>
</comment>
<comment type="PTM">
    <text evidence="1">Ubiquitinated, leading to its degradation. Deubiquitinated by USP16, promoting its stability.</text>
</comment>
<comment type="similarity">
    <text evidence="5">Belongs to the tektin family.</text>
</comment>
<proteinExistence type="evidence at transcript level"/>
<reference key="1">
    <citation type="journal article" date="2006" name="Mol. Reprod. Dev.">
        <title>Tektin 4 is located on outer dense fibers, not associated with axonemal tubulins of flagella in rodent spermatozoa.</title>
        <authorList>
            <person name="Iida H."/>
            <person name="Honda Y."/>
            <person name="Matsuyama T."/>
            <person name="Shibata Y."/>
            <person name="Inai T."/>
        </authorList>
    </citation>
    <scope>NUCLEOTIDE SEQUENCE [MRNA]</scope>
    <scope>SUBCELLULAR LOCATION</scope>
    <source>
        <strain>Wistar</strain>
        <tissue>Testis</tissue>
    </source>
</reference>
<reference key="2">
    <citation type="journal article" date="2004" name="Genome Res.">
        <title>The status, quality, and expansion of the NIH full-length cDNA project: the Mammalian Gene Collection (MGC).</title>
        <authorList>
            <consortium name="The MGC Project Team"/>
        </authorList>
    </citation>
    <scope>NUCLEOTIDE SEQUENCE [LARGE SCALE MRNA]</scope>
    <source>
        <tissue>Testis</tissue>
    </source>
</reference>
<gene>
    <name type="primary">Tekt4</name>
    <name type="synonym">Tek4</name>
</gene>
<keyword id="KW-0966">Cell projection</keyword>
<keyword id="KW-0969">Cilium</keyword>
<keyword id="KW-0970">Cilium biogenesis/degradation</keyword>
<keyword id="KW-0175">Coiled coil</keyword>
<keyword id="KW-0963">Cytoplasm</keyword>
<keyword id="KW-0206">Cytoskeleton</keyword>
<keyword id="KW-0282">Flagellum</keyword>
<keyword id="KW-1185">Reference proteome</keyword>
<keyword id="KW-0832">Ubl conjugation</keyword>
<evidence type="ECO:0000250" key="1">
    <source>
        <dbReference type="UniProtKB" id="Q149S1"/>
    </source>
</evidence>
<evidence type="ECO:0000250" key="2">
    <source>
        <dbReference type="UniProtKB" id="Q2TA38"/>
    </source>
</evidence>
<evidence type="ECO:0000250" key="3">
    <source>
        <dbReference type="UniProtKB" id="Q6X6Z7"/>
    </source>
</evidence>
<evidence type="ECO:0000255" key="4"/>
<evidence type="ECO:0000305" key="5"/>
<name>TEKT4_RAT</name>